<name>ODP2_ACHLA</name>
<feature type="chain" id="PRO_0000162270" description="Dihydrolipoyllysine-residue acetyltransferase component of pyruvate dehydrogenase complex">
    <location>
        <begin position="1"/>
        <end position="544"/>
    </location>
</feature>
<feature type="domain" description="Lipoyl-binding 1" evidence="3">
    <location>
        <begin position="1"/>
        <end position="76"/>
    </location>
</feature>
<feature type="domain" description="Lipoyl-binding 2" evidence="3">
    <location>
        <begin position="113"/>
        <end position="188"/>
    </location>
</feature>
<feature type="domain" description="Peripheral subunit-binding (PSBD)" evidence="4">
    <location>
        <begin position="242"/>
        <end position="279"/>
    </location>
</feature>
<feature type="active site" evidence="2">
    <location>
        <position position="516"/>
    </location>
</feature>
<feature type="modified residue" description="N6-lipoyllysine" evidence="1 3">
    <location>
        <position position="42"/>
    </location>
</feature>
<feature type="modified residue" description="N6-lipoyllysine" evidence="1 3">
    <location>
        <position position="154"/>
    </location>
</feature>
<sequence>MYEFKFADIGEGIHEGTVLQWNFKVGDKVKEGETLVIVETDKVNAELPSPVDGTIVSLGAKEGEEIHVGQIIVTIDDGTGTPAAAPAPAQVSAPTPAPAAAPQVAAPAASGDIYDFKFADIGEGIHEGTILQWNFKVGDKVKEGETLVVVETDKVNAELPSPVDGTILKLGKAEGEVIHVGETVVLIGQNGATLEQAQAPKAEAPVSEPKKGAGVVGEIEVSDDIIGGSEEVHVVATTGKVLASPVARKLASDLGVDIATIKGSGEQGRVMKDDVQNSKAPAEAQAPVQQTQAPAQAAASVAPSFAAAGKPQGDVEVVKITRLRKAVSNAMTRSKSIIPETVLMDEINVDALVNFRNEAKGLAESKGIKLTYMAFIAKAVLIALKEFPMFNASFNHDTDEVYIKKFINLGMAVDTPDGLIVPNIKNADRLSVFELASQVRSLADDTIARKISMDQQTGGTFTITNFGSAGIAFGTPVINYPELAILGIGKIDRKPWVVGNEIKIAHTLPLSLAVDHRIIDGADGGRFLMRVKELLTNPTLLLLS</sequence>
<proteinExistence type="evidence at protein level"/>
<organism>
    <name type="scientific">Acholeplasma laidlawii</name>
    <dbReference type="NCBI Taxonomy" id="2148"/>
    <lineage>
        <taxon>Bacteria</taxon>
        <taxon>Bacillati</taxon>
        <taxon>Mycoplasmatota</taxon>
        <taxon>Mollicutes</taxon>
        <taxon>Acholeplasmatales</taxon>
        <taxon>Acholeplasmataceae</taxon>
        <taxon>Acholeplasma</taxon>
    </lineage>
</organism>
<reference key="1">
    <citation type="journal article" date="1992" name="J. Bacteriol.">
        <title>Identification and analysis of the genes coding for the putative pyruvate dehydrogenase enzyme complex in Acholeplasma laidlawii.</title>
        <authorList>
            <person name="Wallbrandt P."/>
            <person name="Tegman V."/>
            <person name="Jonsson B.-H."/>
            <person name="Wieslander A."/>
        </authorList>
    </citation>
    <scope>NUCLEOTIDE SEQUENCE [GENOMIC DNA]</scope>
    <scope>PARTIAL PROTEIN SEQUENCE</scope>
</reference>
<keyword id="KW-0012">Acyltransferase</keyword>
<keyword id="KW-0903">Direct protein sequencing</keyword>
<keyword id="KW-0450">Lipoyl</keyword>
<keyword id="KW-0677">Repeat</keyword>
<keyword id="KW-0808">Transferase</keyword>
<gene>
    <name type="primary">pdhC</name>
</gene>
<dbReference type="EC" id="2.3.1.12"/>
<dbReference type="EMBL" id="M81753">
    <property type="protein sequence ID" value="AAA21909.1"/>
    <property type="molecule type" value="Genomic_DNA"/>
</dbReference>
<dbReference type="PIR" id="C42653">
    <property type="entry name" value="C42653"/>
</dbReference>
<dbReference type="SMR" id="P35489"/>
<dbReference type="GO" id="GO:0005737">
    <property type="term" value="C:cytoplasm"/>
    <property type="evidence" value="ECO:0007669"/>
    <property type="project" value="TreeGrafter"/>
</dbReference>
<dbReference type="GO" id="GO:0004742">
    <property type="term" value="F:dihydrolipoyllysine-residue acetyltransferase activity"/>
    <property type="evidence" value="ECO:0007669"/>
    <property type="project" value="UniProtKB-EC"/>
</dbReference>
<dbReference type="GO" id="GO:0031405">
    <property type="term" value="F:lipoic acid binding"/>
    <property type="evidence" value="ECO:0007669"/>
    <property type="project" value="TreeGrafter"/>
</dbReference>
<dbReference type="CDD" id="cd06849">
    <property type="entry name" value="lipoyl_domain"/>
    <property type="match status" value="2"/>
</dbReference>
<dbReference type="FunFam" id="3.30.559.10:FF:000007">
    <property type="entry name" value="Dihydrolipoamide acetyltransferase component of pyruvate dehydrogenase complex"/>
    <property type="match status" value="1"/>
</dbReference>
<dbReference type="Gene3D" id="2.40.50.100">
    <property type="match status" value="2"/>
</dbReference>
<dbReference type="Gene3D" id="3.30.559.10">
    <property type="entry name" value="Chloramphenicol acetyltransferase-like domain"/>
    <property type="match status" value="1"/>
</dbReference>
<dbReference type="Gene3D" id="4.10.320.10">
    <property type="entry name" value="E3-binding domain"/>
    <property type="match status" value="1"/>
</dbReference>
<dbReference type="InterPro" id="IPR003016">
    <property type="entry name" value="2-oxoA_DH_lipoyl-BS"/>
</dbReference>
<dbReference type="InterPro" id="IPR001078">
    <property type="entry name" value="2-oxoacid_DH_actylTfrase"/>
</dbReference>
<dbReference type="InterPro" id="IPR050743">
    <property type="entry name" value="2-oxoacid_DH_E2_comp"/>
</dbReference>
<dbReference type="InterPro" id="IPR000089">
    <property type="entry name" value="Biotin_lipoyl"/>
</dbReference>
<dbReference type="InterPro" id="IPR023213">
    <property type="entry name" value="CAT-like_dom_sf"/>
</dbReference>
<dbReference type="InterPro" id="IPR036625">
    <property type="entry name" value="E3-bd_dom_sf"/>
</dbReference>
<dbReference type="InterPro" id="IPR004167">
    <property type="entry name" value="PSBD"/>
</dbReference>
<dbReference type="InterPro" id="IPR011053">
    <property type="entry name" value="Single_hybrid_motif"/>
</dbReference>
<dbReference type="PANTHER" id="PTHR43178">
    <property type="entry name" value="DIHYDROLIPOAMIDE ACETYLTRANSFERASE COMPONENT OF PYRUVATE DEHYDROGENASE COMPLEX"/>
    <property type="match status" value="1"/>
</dbReference>
<dbReference type="PANTHER" id="PTHR43178:SF5">
    <property type="entry name" value="LIPOAMIDE ACYLTRANSFERASE COMPONENT OF BRANCHED-CHAIN ALPHA-KETO ACID DEHYDROGENASE COMPLEX, MITOCHONDRIAL"/>
    <property type="match status" value="1"/>
</dbReference>
<dbReference type="Pfam" id="PF00198">
    <property type="entry name" value="2-oxoacid_dh"/>
    <property type="match status" value="1"/>
</dbReference>
<dbReference type="Pfam" id="PF00364">
    <property type="entry name" value="Biotin_lipoyl"/>
    <property type="match status" value="2"/>
</dbReference>
<dbReference type="Pfam" id="PF02817">
    <property type="entry name" value="E3_binding"/>
    <property type="match status" value="1"/>
</dbReference>
<dbReference type="SUPFAM" id="SSF52777">
    <property type="entry name" value="CoA-dependent acyltransferases"/>
    <property type="match status" value="1"/>
</dbReference>
<dbReference type="SUPFAM" id="SSF47005">
    <property type="entry name" value="Peripheral subunit-binding domain of 2-oxo acid dehydrogenase complex"/>
    <property type="match status" value="1"/>
</dbReference>
<dbReference type="SUPFAM" id="SSF51230">
    <property type="entry name" value="Single hybrid motif"/>
    <property type="match status" value="2"/>
</dbReference>
<dbReference type="PROSITE" id="PS50968">
    <property type="entry name" value="BIOTINYL_LIPOYL"/>
    <property type="match status" value="2"/>
</dbReference>
<dbReference type="PROSITE" id="PS00189">
    <property type="entry name" value="LIPOYL"/>
    <property type="match status" value="2"/>
</dbReference>
<dbReference type="PROSITE" id="PS51826">
    <property type="entry name" value="PSBD"/>
    <property type="match status" value="1"/>
</dbReference>
<accession>P35489</accession>
<protein>
    <recommendedName>
        <fullName>Dihydrolipoyllysine-residue acetyltransferase component of pyruvate dehydrogenase complex</fullName>
        <ecNumber>2.3.1.12</ecNumber>
    </recommendedName>
    <alternativeName>
        <fullName>Dihydrolipoamide acetyltransferase component of pyruvate dehydrogenase complex</fullName>
    </alternativeName>
    <alternativeName>
        <fullName>E2</fullName>
    </alternativeName>
</protein>
<evidence type="ECO:0000250" key="1"/>
<evidence type="ECO:0000255" key="2"/>
<evidence type="ECO:0000255" key="3">
    <source>
        <dbReference type="PROSITE-ProRule" id="PRU01066"/>
    </source>
</evidence>
<evidence type="ECO:0000255" key="4">
    <source>
        <dbReference type="PROSITE-ProRule" id="PRU01170"/>
    </source>
</evidence>
<evidence type="ECO:0000305" key="5"/>
<comment type="function">
    <text>The pyruvate dehydrogenase complex catalyzes the overall conversion of pyruvate to acetyl-CoA and CO(2). It contains multiple copies of three enzymatic components: pyruvate dehydrogenase (E1), dihydrolipoamide acetyltransferase (E2) and lipoamide dehydrogenase (E3).</text>
</comment>
<comment type="catalytic activity">
    <reaction>
        <text>N(6)-[(R)-dihydrolipoyl]-L-lysyl-[protein] + acetyl-CoA = N(6)-[(R)-S(8)-acetyldihydrolipoyl]-L-lysyl-[protein] + CoA</text>
        <dbReference type="Rhea" id="RHEA:17017"/>
        <dbReference type="Rhea" id="RHEA-COMP:10475"/>
        <dbReference type="Rhea" id="RHEA-COMP:10478"/>
        <dbReference type="ChEBI" id="CHEBI:57287"/>
        <dbReference type="ChEBI" id="CHEBI:57288"/>
        <dbReference type="ChEBI" id="CHEBI:83100"/>
        <dbReference type="ChEBI" id="CHEBI:83111"/>
        <dbReference type="EC" id="2.3.1.12"/>
    </reaction>
</comment>
<comment type="cofactor">
    <cofactor evidence="5">
        <name>(R)-lipoate</name>
        <dbReference type="ChEBI" id="CHEBI:83088"/>
    </cofactor>
    <text evidence="5">Binds 2 lipoyl cofactors covalently.</text>
</comment>
<comment type="subunit">
    <text evidence="1">Forms a 24-polypeptide structural core with octahedral symmetry.</text>
</comment>
<comment type="similarity">
    <text evidence="5">Belongs to the 2-oxoacid dehydrogenase family.</text>
</comment>